<dbReference type="EMBL" id="DP000238">
    <property type="protein sequence ID" value="ABK76931.1"/>
    <property type="molecule type" value="Genomic_DNA"/>
</dbReference>
<dbReference type="SMR" id="A0RUB4"/>
<dbReference type="STRING" id="414004.CENSYa_0293"/>
<dbReference type="EnsemblBacteria" id="ABK76931">
    <property type="protein sequence ID" value="ABK76931"/>
    <property type="gene ID" value="CENSYa_0293"/>
</dbReference>
<dbReference type="KEGG" id="csy:CENSYa_0293"/>
<dbReference type="PATRIC" id="fig|414004.10.peg.257"/>
<dbReference type="HOGENOM" id="CLU_084513_4_0_2"/>
<dbReference type="Proteomes" id="UP000000758">
    <property type="component" value="Chromosome"/>
</dbReference>
<dbReference type="GO" id="GO:0005737">
    <property type="term" value="C:cytoplasm"/>
    <property type="evidence" value="ECO:0007669"/>
    <property type="project" value="UniProtKB-SubCell"/>
</dbReference>
<dbReference type="GO" id="GO:1990904">
    <property type="term" value="C:ribonucleoprotein complex"/>
    <property type="evidence" value="ECO:0007669"/>
    <property type="project" value="UniProtKB-KW"/>
</dbReference>
<dbReference type="GO" id="GO:0005840">
    <property type="term" value="C:ribosome"/>
    <property type="evidence" value="ECO:0007669"/>
    <property type="project" value="UniProtKB-KW"/>
</dbReference>
<dbReference type="GO" id="GO:0004526">
    <property type="term" value="F:ribonuclease P activity"/>
    <property type="evidence" value="ECO:0007669"/>
    <property type="project" value="UniProtKB-UniRule"/>
</dbReference>
<dbReference type="GO" id="GO:0019843">
    <property type="term" value="F:rRNA binding"/>
    <property type="evidence" value="ECO:0007669"/>
    <property type="project" value="UniProtKB-KW"/>
</dbReference>
<dbReference type="GO" id="GO:0003735">
    <property type="term" value="F:structural constituent of ribosome"/>
    <property type="evidence" value="ECO:0007669"/>
    <property type="project" value="InterPro"/>
</dbReference>
<dbReference type="GO" id="GO:0006412">
    <property type="term" value="P:translation"/>
    <property type="evidence" value="ECO:0007669"/>
    <property type="project" value="UniProtKB-UniRule"/>
</dbReference>
<dbReference type="GO" id="GO:0001682">
    <property type="term" value="P:tRNA 5'-leader removal"/>
    <property type="evidence" value="ECO:0007669"/>
    <property type="project" value="UniProtKB-UniRule"/>
</dbReference>
<dbReference type="FunFam" id="3.30.1330.30:FF:000020">
    <property type="entry name" value="50S ribosomal protein L7Ae"/>
    <property type="match status" value="1"/>
</dbReference>
<dbReference type="Gene3D" id="3.30.1330.30">
    <property type="match status" value="1"/>
</dbReference>
<dbReference type="HAMAP" id="MF_00326">
    <property type="entry name" value="Ribosomal_eL8"/>
    <property type="match status" value="1"/>
</dbReference>
<dbReference type="InterPro" id="IPR050257">
    <property type="entry name" value="eL8/uL1-like"/>
</dbReference>
<dbReference type="InterPro" id="IPR029064">
    <property type="entry name" value="Ribosomal_eL30-like_sf"/>
</dbReference>
<dbReference type="InterPro" id="IPR004038">
    <property type="entry name" value="Ribosomal_eL8/eL30/eS12/Gad45"/>
</dbReference>
<dbReference type="InterPro" id="IPR018492">
    <property type="entry name" value="Ribosomal_eL8/Nhp2"/>
</dbReference>
<dbReference type="InterPro" id="IPR022481">
    <property type="entry name" value="Ribosomal_eL8_arc"/>
</dbReference>
<dbReference type="NCBIfam" id="TIGR03677">
    <property type="entry name" value="eL8_ribo"/>
    <property type="match status" value="1"/>
</dbReference>
<dbReference type="PANTHER" id="PTHR23105">
    <property type="entry name" value="RIBOSOMAL PROTEIN L7AE FAMILY MEMBER"/>
    <property type="match status" value="1"/>
</dbReference>
<dbReference type="Pfam" id="PF01248">
    <property type="entry name" value="Ribosomal_L7Ae"/>
    <property type="match status" value="1"/>
</dbReference>
<dbReference type="PRINTS" id="PR00881">
    <property type="entry name" value="L7ARS6FAMILY"/>
</dbReference>
<dbReference type="PRINTS" id="PR00884">
    <property type="entry name" value="RIBOSOMALHS6"/>
</dbReference>
<dbReference type="SUPFAM" id="SSF55315">
    <property type="entry name" value="L30e-like"/>
    <property type="match status" value="1"/>
</dbReference>
<accession>A0RUB4</accession>
<keyword id="KW-0963">Cytoplasm</keyword>
<keyword id="KW-1185">Reference proteome</keyword>
<keyword id="KW-0687">Ribonucleoprotein</keyword>
<keyword id="KW-0689">Ribosomal protein</keyword>
<keyword id="KW-0694">RNA-binding</keyword>
<keyword id="KW-0699">rRNA-binding</keyword>
<keyword id="KW-0819">tRNA processing</keyword>
<proteinExistence type="inferred from homology"/>
<protein>
    <recommendedName>
        <fullName evidence="1">Large ribosomal subunit protein eL8</fullName>
    </recommendedName>
    <alternativeName>
        <fullName evidence="2">50S ribosomal protein L7Ae</fullName>
    </alternativeName>
    <alternativeName>
        <fullName evidence="1">Ribosomal protein L8e</fullName>
    </alternativeName>
</protein>
<reference key="1">
    <citation type="journal article" date="2006" name="Proc. Natl. Acad. Sci. U.S.A.">
        <title>Genomic analysis of the uncultivated marine crenarchaeote Cenarchaeum symbiosum.</title>
        <authorList>
            <person name="Hallam S.J."/>
            <person name="Konstantinidis K.T."/>
            <person name="Putnam N."/>
            <person name="Schleper C."/>
            <person name="Watanabe Y."/>
            <person name="Sugahara J."/>
            <person name="Preston C."/>
            <person name="de la Torre J."/>
            <person name="Richardson P.M."/>
            <person name="DeLong E.F."/>
        </authorList>
    </citation>
    <scope>NUCLEOTIDE SEQUENCE [LARGE SCALE GENOMIC DNA]</scope>
    <source>
        <strain>A</strain>
    </source>
</reference>
<gene>
    <name evidence="1" type="primary">rpl7ae</name>
    <name type="ordered locus">CENSYa_0293</name>
</gene>
<name>RL7A_CENSY</name>
<comment type="function">
    <text evidence="1">Multifunctional RNA-binding protein that recognizes the K-turn motif in ribosomal RNA, the RNA component of RNase P, box H/ACA, box C/D and box C'/D' sRNAs.</text>
</comment>
<comment type="subunit">
    <text evidence="1">Part of the 50S ribosomal subunit. Probably part of the RNase P complex.</text>
</comment>
<comment type="subcellular location">
    <subcellularLocation>
        <location evidence="1">Cytoplasm</location>
    </subcellularLocation>
</comment>
<comment type="similarity">
    <text evidence="1">Belongs to the eukaryotic ribosomal protein eL8 family.</text>
</comment>
<sequence length="126" mass="13273">MAKGYYVKFETPKDLVNPILEALRAATQSGKVKKGTNEATKAIERGTSKLVVIAEDVEPPEVVAHLPILCDEQGAAYAFVPSKQDLGKALGIDITSAAAILDSGDAQHIVDQVISSIAKIKGETGK</sequence>
<evidence type="ECO:0000255" key="1">
    <source>
        <dbReference type="HAMAP-Rule" id="MF_00326"/>
    </source>
</evidence>
<evidence type="ECO:0000305" key="2"/>
<feature type="chain" id="PRO_1000194094" description="Large ribosomal subunit protein eL8">
    <location>
        <begin position="1"/>
        <end position="126"/>
    </location>
</feature>
<organism>
    <name type="scientific">Cenarchaeum symbiosum (strain A)</name>
    <dbReference type="NCBI Taxonomy" id="414004"/>
    <lineage>
        <taxon>Archaea</taxon>
        <taxon>Nitrososphaerota</taxon>
        <taxon>Candidatus Cenarchaeales</taxon>
        <taxon>Candidatus Cenarchaeaceae</taxon>
        <taxon>Candidatus Cenarchaeum</taxon>
    </lineage>
</organism>